<accession>A6H5P1</accession>
<dbReference type="EMBL" id="AP009339">
    <property type="protein sequence ID" value="BAF65007.1"/>
    <property type="molecule type" value="Genomic_DNA"/>
</dbReference>
<dbReference type="RefSeq" id="YP_001312265.1">
    <property type="nucleotide sequence ID" value="NC_009618.1"/>
</dbReference>
<dbReference type="SMR" id="A6H5P1"/>
<dbReference type="GeneID" id="5309547"/>
<dbReference type="GO" id="GO:0009535">
    <property type="term" value="C:chloroplast thylakoid membrane"/>
    <property type="evidence" value="ECO:0007669"/>
    <property type="project" value="UniProtKB-SubCell"/>
</dbReference>
<dbReference type="GO" id="GO:0005886">
    <property type="term" value="C:plasma membrane"/>
    <property type="evidence" value="ECO:0007669"/>
    <property type="project" value="TreeGrafter"/>
</dbReference>
<dbReference type="GO" id="GO:0020037">
    <property type="term" value="F:heme binding"/>
    <property type="evidence" value="ECO:0007669"/>
    <property type="project" value="InterPro"/>
</dbReference>
<dbReference type="GO" id="GO:0017004">
    <property type="term" value="P:cytochrome complex assembly"/>
    <property type="evidence" value="ECO:0007669"/>
    <property type="project" value="UniProtKB-UniRule"/>
</dbReference>
<dbReference type="HAMAP" id="MF_01391">
    <property type="entry name" value="CytC_CcsA"/>
    <property type="match status" value="1"/>
</dbReference>
<dbReference type="InterPro" id="IPR002541">
    <property type="entry name" value="Cyt_c_assembly"/>
</dbReference>
<dbReference type="InterPro" id="IPR017562">
    <property type="entry name" value="Cyt_c_biogenesis_CcsA"/>
</dbReference>
<dbReference type="InterPro" id="IPR045062">
    <property type="entry name" value="Cyt_c_biogenesis_CcsA/CcmC"/>
</dbReference>
<dbReference type="NCBIfam" id="TIGR03144">
    <property type="entry name" value="cytochr_II_ccsB"/>
    <property type="match status" value="1"/>
</dbReference>
<dbReference type="PANTHER" id="PTHR30071:SF1">
    <property type="entry name" value="CYTOCHROME B_B6 PROTEIN-RELATED"/>
    <property type="match status" value="1"/>
</dbReference>
<dbReference type="PANTHER" id="PTHR30071">
    <property type="entry name" value="HEME EXPORTER PROTEIN C"/>
    <property type="match status" value="1"/>
</dbReference>
<dbReference type="Pfam" id="PF01578">
    <property type="entry name" value="Cytochrom_C_asm"/>
    <property type="match status" value="1"/>
</dbReference>
<protein>
    <recommendedName>
        <fullName evidence="1">Cytochrome c biogenesis protein CcsA</fullName>
    </recommendedName>
</protein>
<comment type="function">
    <text evidence="1">Required during biogenesis of c-type cytochromes (cytochrome c6 and cytochrome f) at the step of heme attachment.</text>
</comment>
<comment type="subunit">
    <text evidence="1">May interact with Ccs1.</text>
</comment>
<comment type="subcellular location">
    <subcellularLocation>
        <location evidence="1">Plastid</location>
        <location evidence="1">Chloroplast thylakoid membrane</location>
        <topology evidence="1">Multi-pass membrane protein</topology>
    </subcellularLocation>
</comment>
<comment type="similarity">
    <text evidence="1">Belongs to the CcmF/CycK/Ccl1/NrfE/CcsA family.</text>
</comment>
<sequence>MIFITLEHILAHISFSLISVVTLAYWGTLVHQIEGLSSSGGKGMIVTFVCTTGLLITRWLYSGHLPLSNLYESFMFLSWSSSVIHIILEVRSQKDRGLGAITAPSTMLTHGFATSGLPKEMQQSAMLVPALQSHWLMMHVSMILLSYATLLCGSLSSIAFLIITFRRNRRILSLLSARDNSFIWPFPSRNNLYLHEQEKSDLQNTFYLSFTNHRKCKLTQQLDYWSYRVIGLGFLLLTIGILSGAVWANEAWGSRWSWDPKETWALITWIIFAIYLHTRVNKGWQDENPAIIASLGSFIVWICYLGVDLLGIGLHSYGWLI</sequence>
<name>CCSA_CYCTA</name>
<keyword id="KW-0150">Chloroplast</keyword>
<keyword id="KW-0201">Cytochrome c-type biogenesis</keyword>
<keyword id="KW-0472">Membrane</keyword>
<keyword id="KW-0934">Plastid</keyword>
<keyword id="KW-0793">Thylakoid</keyword>
<keyword id="KW-0812">Transmembrane</keyword>
<keyword id="KW-1133">Transmembrane helix</keyword>
<organism>
    <name type="scientific">Cycas taitungensis</name>
    <name type="common">Prince sago</name>
    <name type="synonym">Cycas taiwaniana</name>
    <dbReference type="NCBI Taxonomy" id="54799"/>
    <lineage>
        <taxon>Eukaryota</taxon>
        <taxon>Viridiplantae</taxon>
        <taxon>Streptophyta</taxon>
        <taxon>Embryophyta</taxon>
        <taxon>Tracheophyta</taxon>
        <taxon>Spermatophyta</taxon>
        <taxon>Cycadidae</taxon>
        <taxon>Cycadales</taxon>
        <taxon>Cycadaceae</taxon>
        <taxon>Cycas</taxon>
    </lineage>
</organism>
<reference key="1">
    <citation type="journal article" date="2007" name="Mol. Biol. Evol.">
        <title>Chloroplast genome (cpDNA) of Cycas taitungensis and 56 cp protein-coding genes of Gnetum parvifolium: insights into cpDNA evolution and phylogeny of extant seed plants.</title>
        <authorList>
            <person name="Wu C.-S."/>
            <person name="Wang Y.-N."/>
            <person name="Liu S.-M."/>
            <person name="Chaw S.-M."/>
        </authorList>
    </citation>
    <scope>NUCLEOTIDE SEQUENCE [LARGE SCALE GENOMIC DNA]</scope>
</reference>
<geneLocation type="chloroplast"/>
<gene>
    <name evidence="1" type="primary">ccsA</name>
</gene>
<proteinExistence type="inferred from homology"/>
<evidence type="ECO:0000255" key="1">
    <source>
        <dbReference type="HAMAP-Rule" id="MF_01391"/>
    </source>
</evidence>
<feature type="chain" id="PRO_0000353747" description="Cytochrome c biogenesis protein CcsA">
    <location>
        <begin position="1"/>
        <end position="321"/>
    </location>
</feature>
<feature type="transmembrane region" description="Helical" evidence="1">
    <location>
        <begin position="1"/>
        <end position="21"/>
    </location>
</feature>
<feature type="transmembrane region" description="Helical" evidence="1">
    <location>
        <begin position="36"/>
        <end position="56"/>
    </location>
</feature>
<feature type="transmembrane region" description="Helical" evidence="1">
    <location>
        <begin position="70"/>
        <end position="90"/>
    </location>
</feature>
<feature type="transmembrane region" description="Helical" evidence="1">
    <location>
        <begin position="97"/>
        <end position="117"/>
    </location>
</feature>
<feature type="transmembrane region" description="Helical" evidence="1">
    <location>
        <begin position="143"/>
        <end position="163"/>
    </location>
</feature>
<feature type="transmembrane region" description="Helical" evidence="1">
    <location>
        <begin position="229"/>
        <end position="249"/>
    </location>
</feature>
<feature type="transmembrane region" description="Helical" evidence="1">
    <location>
        <begin position="256"/>
        <end position="276"/>
    </location>
</feature>
<feature type="transmembrane region" description="Helical" evidence="1">
    <location>
        <begin position="290"/>
        <end position="310"/>
    </location>
</feature>